<protein>
    <recommendedName>
        <fullName>Putative ATP-dependent RNA helicase QP509L</fullName>
        <ecNumber>3.6.4.13</ecNumber>
    </recommendedName>
</protein>
<sequence length="509" mass="58120">MEAIISFAGIGINYKKLQSKLQHDVGRFLRALTITARALPGQPKHIAIRQETAFTLQGEYIYFPILLRKQFEMFNMVYTAHPVSLRALPCVETEFPLFNYQQEMVDKIHKKLLSPYGRFYLHLNTGLGKTRIAISIIQKLLYPTLVIVPTKAIQIQWIDELKLLLPHLRVAAYNNAACKKKDITSKEYDVIVGIINTLRKKPEPFFEPFGLVVLDEAHELHSPENYKIFWKIQLSRILGLSATPLDRPDGMDKIILHHLGQPQRTVSPTTTFSGYVREIEYQGHPDFVKPVCINEKVSAIATIDKLLQDPSRIQLVVNETKRLYSLHTAEPQKWGTNEPYGIIIFVEFRKLLEIFYQALSEEFKDVQIIVPEVALLCGGVSNTALSQAHSASIILLTYGYGRRGISFKHMTSIIMATPRRNNMEQILGRITRQGSDEKKVRIVVDIKDTLSPLSSQVYDRHRIYKKKGYPIFKCSASYQQPYSSNEVLIWDPYNESCLASTTTPPSPSK</sequence>
<feature type="chain" id="PRO_0000373116" description="Putative ATP-dependent RNA helicase QP509L">
    <location>
        <begin position="1"/>
        <end position="509"/>
    </location>
</feature>
<feature type="domain" description="Helicase ATP-binding" evidence="1">
    <location>
        <begin position="110"/>
        <end position="262"/>
    </location>
</feature>
<feature type="short sequence motif" description="DEAH box">
    <location>
        <begin position="215"/>
        <end position="218"/>
    </location>
</feature>
<feature type="binding site" evidence="1">
    <location>
        <begin position="123"/>
        <end position="130"/>
    </location>
    <ligand>
        <name>ATP</name>
        <dbReference type="ChEBI" id="CHEBI:30616"/>
    </ligand>
</feature>
<organismHost>
    <name type="scientific">Ornithodoros</name>
    <name type="common">relapsing fever ticks</name>
    <dbReference type="NCBI Taxonomy" id="6937"/>
</organismHost>
<organismHost>
    <name type="scientific">Phacochoerus aethiopicus</name>
    <name type="common">Warthog</name>
    <dbReference type="NCBI Taxonomy" id="85517"/>
</organismHost>
<organismHost>
    <name type="scientific">Phacochoerus africanus</name>
    <name type="common">Warthog</name>
    <dbReference type="NCBI Taxonomy" id="41426"/>
</organismHost>
<organismHost>
    <name type="scientific">Potamochoerus larvatus</name>
    <name type="common">Bushpig</name>
    <dbReference type="NCBI Taxonomy" id="273792"/>
</organismHost>
<organismHost>
    <name type="scientific">Sus scrofa</name>
    <name type="common">Pig</name>
    <dbReference type="NCBI Taxonomy" id="9823"/>
</organismHost>
<proteinExistence type="inferred from homology"/>
<comment type="catalytic activity">
    <reaction>
        <text>ATP + H2O = ADP + phosphate + H(+)</text>
        <dbReference type="Rhea" id="RHEA:13065"/>
        <dbReference type="ChEBI" id="CHEBI:15377"/>
        <dbReference type="ChEBI" id="CHEBI:15378"/>
        <dbReference type="ChEBI" id="CHEBI:30616"/>
        <dbReference type="ChEBI" id="CHEBI:43474"/>
        <dbReference type="ChEBI" id="CHEBI:456216"/>
        <dbReference type="EC" id="3.6.4.13"/>
    </reaction>
</comment>
<comment type="induction">
    <text evidence="2">Expressed in the late phase of the viral replicative cycle.</text>
</comment>
<comment type="similarity">
    <text evidence="2">Belongs to the DEAD box helicase family. DEAH subfamily.</text>
</comment>
<evidence type="ECO:0000255" key="1">
    <source>
        <dbReference type="PROSITE-ProRule" id="PRU00541"/>
    </source>
</evidence>
<evidence type="ECO:0000305" key="2"/>
<gene>
    <name type="ordered locus">Ken-135</name>
</gene>
<keyword id="KW-0067">ATP-binding</keyword>
<keyword id="KW-0347">Helicase</keyword>
<keyword id="KW-0378">Hydrolase</keyword>
<keyword id="KW-0426">Late protein</keyword>
<keyword id="KW-0547">Nucleotide-binding</keyword>
<dbReference type="EC" id="3.6.4.13"/>
<dbReference type="EMBL" id="AY261360">
    <property type="status" value="NOT_ANNOTATED_CDS"/>
    <property type="molecule type" value="Genomic_DNA"/>
</dbReference>
<dbReference type="SMR" id="P0C9B0"/>
<dbReference type="Proteomes" id="UP000000861">
    <property type="component" value="Segment"/>
</dbReference>
<dbReference type="GO" id="GO:0005524">
    <property type="term" value="F:ATP binding"/>
    <property type="evidence" value="ECO:0007669"/>
    <property type="project" value="UniProtKB-KW"/>
</dbReference>
<dbReference type="GO" id="GO:0016887">
    <property type="term" value="F:ATP hydrolysis activity"/>
    <property type="evidence" value="ECO:0007669"/>
    <property type="project" value="RHEA"/>
</dbReference>
<dbReference type="GO" id="GO:0003677">
    <property type="term" value="F:DNA binding"/>
    <property type="evidence" value="ECO:0007669"/>
    <property type="project" value="InterPro"/>
</dbReference>
<dbReference type="GO" id="GO:0003724">
    <property type="term" value="F:RNA helicase activity"/>
    <property type="evidence" value="ECO:0007669"/>
    <property type="project" value="UniProtKB-EC"/>
</dbReference>
<dbReference type="Gene3D" id="3.40.50.300">
    <property type="entry name" value="P-loop containing nucleotide triphosphate hydrolases"/>
    <property type="match status" value="2"/>
</dbReference>
<dbReference type="InterPro" id="IPR006935">
    <property type="entry name" value="Helicase/UvrB_N"/>
</dbReference>
<dbReference type="InterPro" id="IPR014001">
    <property type="entry name" value="Helicase_ATP-bd"/>
</dbReference>
<dbReference type="InterPro" id="IPR050742">
    <property type="entry name" value="Helicase_Restrict-Modif_Enz"/>
</dbReference>
<dbReference type="InterPro" id="IPR027417">
    <property type="entry name" value="P-loop_NTPase"/>
</dbReference>
<dbReference type="PANTHER" id="PTHR47396:SF1">
    <property type="entry name" value="ATP-DEPENDENT HELICASE IRC3-RELATED"/>
    <property type="match status" value="1"/>
</dbReference>
<dbReference type="PANTHER" id="PTHR47396">
    <property type="entry name" value="TYPE I RESTRICTION ENZYME ECOKI R PROTEIN"/>
    <property type="match status" value="1"/>
</dbReference>
<dbReference type="Pfam" id="PF04851">
    <property type="entry name" value="ResIII"/>
    <property type="match status" value="1"/>
</dbReference>
<dbReference type="SMART" id="SM00487">
    <property type="entry name" value="DEXDc"/>
    <property type="match status" value="1"/>
</dbReference>
<dbReference type="SUPFAM" id="SSF52540">
    <property type="entry name" value="P-loop containing nucleoside triphosphate hydrolases"/>
    <property type="match status" value="2"/>
</dbReference>
<dbReference type="PROSITE" id="PS00690">
    <property type="entry name" value="DEAH_ATP_HELICASE"/>
    <property type="match status" value="1"/>
</dbReference>
<dbReference type="PROSITE" id="PS51192">
    <property type="entry name" value="HELICASE_ATP_BIND_1"/>
    <property type="match status" value="1"/>
</dbReference>
<organism>
    <name type="scientific">African swine fever virus (isolate Pig/Kenya/KEN-50/1950)</name>
    <name type="common">ASFV</name>
    <dbReference type="NCBI Taxonomy" id="561445"/>
    <lineage>
        <taxon>Viruses</taxon>
        <taxon>Varidnaviria</taxon>
        <taxon>Bamfordvirae</taxon>
        <taxon>Nucleocytoviricota</taxon>
        <taxon>Pokkesviricetes</taxon>
        <taxon>Asfuvirales</taxon>
        <taxon>Asfarviridae</taxon>
        <taxon>Asfivirus</taxon>
        <taxon>African swine fever virus</taxon>
    </lineage>
</organism>
<reference key="1">
    <citation type="submission" date="2003-03" db="EMBL/GenBank/DDBJ databases">
        <title>African swine fever virus genomes.</title>
        <authorList>
            <person name="Kutish G.F."/>
            <person name="Rock D.L."/>
        </authorList>
    </citation>
    <scope>NUCLEOTIDE SEQUENCE [LARGE SCALE GENOMIC DNA]</scope>
</reference>
<name>VF509_ASFK5</name>
<accession>P0C9B0</accession>